<accession>D3RKL3</accession>
<feature type="chain" id="PRO_0000402969" description="Putative carbamate hydrolase RutD">
    <location>
        <begin position="1"/>
        <end position="266"/>
    </location>
</feature>
<feature type="domain" description="AB hydrolase-1" evidence="1">
    <location>
        <begin position="15"/>
        <end position="239"/>
    </location>
</feature>
<proteinExistence type="inferred from homology"/>
<evidence type="ECO:0000255" key="1">
    <source>
        <dbReference type="HAMAP-Rule" id="MF_00832"/>
    </source>
</evidence>
<name>RUTD_KLEVT</name>
<dbReference type="EC" id="3.5.1.-" evidence="1"/>
<dbReference type="EMBL" id="CP001891">
    <property type="protein sequence ID" value="ADC59224.1"/>
    <property type="molecule type" value="Genomic_DNA"/>
</dbReference>
<dbReference type="RefSeq" id="WP_012968590.1">
    <property type="nucleotide sequence ID" value="NC_013850.1"/>
</dbReference>
<dbReference type="SMR" id="D3RKL3"/>
<dbReference type="ESTHER" id="klevt-rutd">
    <property type="family name" value="RutD"/>
</dbReference>
<dbReference type="KEGG" id="kva:Kvar_3344"/>
<dbReference type="HOGENOM" id="CLU_020336_50_1_6"/>
<dbReference type="GO" id="GO:0016811">
    <property type="term" value="F:hydrolase activity, acting on carbon-nitrogen (but not peptide) bonds, in linear amides"/>
    <property type="evidence" value="ECO:0007669"/>
    <property type="project" value="InterPro"/>
</dbReference>
<dbReference type="GO" id="GO:0019740">
    <property type="term" value="P:nitrogen utilization"/>
    <property type="evidence" value="ECO:0007669"/>
    <property type="project" value="UniProtKB-UniRule"/>
</dbReference>
<dbReference type="GO" id="GO:0006212">
    <property type="term" value="P:uracil catabolic process"/>
    <property type="evidence" value="ECO:0007669"/>
    <property type="project" value="UniProtKB-UniRule"/>
</dbReference>
<dbReference type="Gene3D" id="3.40.50.1820">
    <property type="entry name" value="alpha/beta hydrolase"/>
    <property type="match status" value="1"/>
</dbReference>
<dbReference type="HAMAP" id="MF_00832">
    <property type="entry name" value="RutD"/>
    <property type="match status" value="1"/>
</dbReference>
<dbReference type="InterPro" id="IPR000073">
    <property type="entry name" value="AB_hydrolase_1"/>
</dbReference>
<dbReference type="InterPro" id="IPR029058">
    <property type="entry name" value="AB_hydrolase_fold"/>
</dbReference>
<dbReference type="InterPro" id="IPR050228">
    <property type="entry name" value="Carboxylesterase_BioH"/>
</dbReference>
<dbReference type="InterPro" id="IPR019913">
    <property type="entry name" value="Pyrimidine_utilisation_RutD"/>
</dbReference>
<dbReference type="NCBIfam" id="TIGR03611">
    <property type="entry name" value="RutD"/>
    <property type="match status" value="1"/>
</dbReference>
<dbReference type="PANTHER" id="PTHR43194">
    <property type="entry name" value="HYDROLASE ALPHA/BETA FOLD FAMILY"/>
    <property type="match status" value="1"/>
</dbReference>
<dbReference type="PANTHER" id="PTHR43194:SF2">
    <property type="entry name" value="PEROXISOMAL MEMBRANE PROTEIN LPX1"/>
    <property type="match status" value="1"/>
</dbReference>
<dbReference type="Pfam" id="PF00561">
    <property type="entry name" value="Abhydrolase_1"/>
    <property type="match status" value="1"/>
</dbReference>
<dbReference type="PRINTS" id="PR00111">
    <property type="entry name" value="ABHYDROLASE"/>
</dbReference>
<dbReference type="SUPFAM" id="SSF53474">
    <property type="entry name" value="alpha/beta-Hydrolases"/>
    <property type="match status" value="1"/>
</dbReference>
<keyword id="KW-0378">Hydrolase</keyword>
<comment type="function">
    <text evidence="1">Involved in pyrimidine catabolism. May facilitate the hydrolysis of carbamate, a reaction that can also occur spontaneously.</text>
</comment>
<comment type="catalytic activity">
    <reaction evidence="1">
        <text>carbamate + 2 H(+) = NH4(+) + CO2</text>
        <dbReference type="Rhea" id="RHEA:15649"/>
        <dbReference type="ChEBI" id="CHEBI:13941"/>
        <dbReference type="ChEBI" id="CHEBI:15378"/>
        <dbReference type="ChEBI" id="CHEBI:16526"/>
        <dbReference type="ChEBI" id="CHEBI:28938"/>
    </reaction>
</comment>
<comment type="similarity">
    <text evidence="1">Belongs to the AB hydrolase superfamily. Hydrolase RutD family.</text>
</comment>
<sequence>MMRLNIAPAPWPGAPVVVLSAGLGGGGGYWLAQRAALEAQYQLVSYDHNGTGENAGPLPADYSMATMAQELLSALQAAGITRFALVGHALGALIGLQLALDRPEAVSALVLVNGWLTLSPHTRRCFLVRERLLHAGGAQAWVEAQPLFLYPAEWMAARLPRLEAEDALAISHFQGKENLLKRLQALKQADFSRRAAAIACPTLIVSAADDLLVPASCSRVLQAAIPGSQRVEMPWGGHACNVTDADTFNTILCDGLAAMLPVAREI</sequence>
<reference key="1">
    <citation type="submission" date="2010-02" db="EMBL/GenBank/DDBJ databases">
        <title>Complete sequence of Klebsiella variicola At-22.</title>
        <authorList>
            <consortium name="US DOE Joint Genome Institute"/>
            <person name="Lucas S."/>
            <person name="Copeland A."/>
            <person name="Lapidus A."/>
            <person name="Cheng J.-F."/>
            <person name="Bruce D."/>
            <person name="Goodwin L."/>
            <person name="Pitluck S."/>
            <person name="Davenport K."/>
            <person name="Brettin T."/>
            <person name="Detter J.C."/>
            <person name="Han C."/>
            <person name="Tapia R."/>
            <person name="Larimer F."/>
            <person name="Land M."/>
            <person name="Hauser L."/>
            <person name="Kyrpides N."/>
            <person name="Ivanova N."/>
            <person name="Pinto A."/>
            <person name="Currie C."/>
            <person name="Woyke T."/>
        </authorList>
    </citation>
    <scope>NUCLEOTIDE SEQUENCE [LARGE SCALE GENOMIC DNA]</scope>
    <source>
        <strain>At-22</strain>
    </source>
</reference>
<protein>
    <recommendedName>
        <fullName evidence="1">Putative carbamate hydrolase RutD</fullName>
        <ecNumber evidence="1">3.5.1.-</ecNumber>
    </recommendedName>
    <alternativeName>
        <fullName evidence="1">Aminohydrolase</fullName>
    </alternativeName>
</protein>
<gene>
    <name evidence="1" type="primary">rutD</name>
    <name type="ordered locus">Kvar_3344</name>
</gene>
<organism>
    <name type="scientific">Klebsiella variicola (strain At-22)</name>
    <dbReference type="NCBI Taxonomy" id="640131"/>
    <lineage>
        <taxon>Bacteria</taxon>
        <taxon>Pseudomonadati</taxon>
        <taxon>Pseudomonadota</taxon>
        <taxon>Gammaproteobacteria</taxon>
        <taxon>Enterobacterales</taxon>
        <taxon>Enterobacteriaceae</taxon>
        <taxon>Klebsiella/Raoultella group</taxon>
        <taxon>Klebsiella</taxon>
        <taxon>Klebsiella pneumoniae complex</taxon>
    </lineage>
</organism>